<protein>
    <recommendedName>
        <fullName evidence="1">Tyrosine--tRNA ligase</fullName>
        <ecNumber evidence="1">6.1.1.1</ecNumber>
    </recommendedName>
    <alternativeName>
        <fullName evidence="1">Tyrosyl-tRNA synthetase</fullName>
        <shortName evidence="1">TyrRS</shortName>
    </alternativeName>
</protein>
<gene>
    <name evidence="1" type="primary">tyrS</name>
    <name type="ordered locus">SPN23F21240</name>
</gene>
<reference key="1">
    <citation type="journal article" date="2009" name="J. Bacteriol.">
        <title>Role of conjugative elements in the evolution of the multidrug-resistant pandemic clone Streptococcus pneumoniae Spain23F ST81.</title>
        <authorList>
            <person name="Croucher N.J."/>
            <person name="Walker D."/>
            <person name="Romero P."/>
            <person name="Lennard N."/>
            <person name="Paterson G.K."/>
            <person name="Bason N.C."/>
            <person name="Mitchell A.M."/>
            <person name="Quail M.A."/>
            <person name="Andrew P.W."/>
            <person name="Parkhill J."/>
            <person name="Bentley S.D."/>
            <person name="Mitchell T.J."/>
        </authorList>
    </citation>
    <scope>NUCLEOTIDE SEQUENCE [LARGE SCALE GENOMIC DNA]</scope>
    <source>
        <strain>ATCC 700669 / Spain 23F-1</strain>
    </source>
</reference>
<name>SYY_STRPJ</name>
<evidence type="ECO:0000255" key="1">
    <source>
        <dbReference type="HAMAP-Rule" id="MF_02006"/>
    </source>
</evidence>
<dbReference type="EC" id="6.1.1.1" evidence="1"/>
<dbReference type="EMBL" id="FM211187">
    <property type="protein sequence ID" value="CAR69863.1"/>
    <property type="molecule type" value="Genomic_DNA"/>
</dbReference>
<dbReference type="RefSeq" id="WP_000546887.1">
    <property type="nucleotide sequence ID" value="NC_011900.1"/>
</dbReference>
<dbReference type="SMR" id="B8ZPM2"/>
<dbReference type="KEGG" id="sne:SPN23F21240"/>
<dbReference type="HOGENOM" id="CLU_024003_0_3_9"/>
<dbReference type="GO" id="GO:0005829">
    <property type="term" value="C:cytosol"/>
    <property type="evidence" value="ECO:0007669"/>
    <property type="project" value="TreeGrafter"/>
</dbReference>
<dbReference type="GO" id="GO:0005524">
    <property type="term" value="F:ATP binding"/>
    <property type="evidence" value="ECO:0007669"/>
    <property type="project" value="UniProtKB-UniRule"/>
</dbReference>
<dbReference type="GO" id="GO:0003723">
    <property type="term" value="F:RNA binding"/>
    <property type="evidence" value="ECO:0007669"/>
    <property type="project" value="UniProtKB-KW"/>
</dbReference>
<dbReference type="GO" id="GO:0004831">
    <property type="term" value="F:tyrosine-tRNA ligase activity"/>
    <property type="evidence" value="ECO:0007669"/>
    <property type="project" value="UniProtKB-UniRule"/>
</dbReference>
<dbReference type="GO" id="GO:0006437">
    <property type="term" value="P:tyrosyl-tRNA aminoacylation"/>
    <property type="evidence" value="ECO:0007669"/>
    <property type="project" value="UniProtKB-UniRule"/>
</dbReference>
<dbReference type="CDD" id="cd00165">
    <property type="entry name" value="S4"/>
    <property type="match status" value="1"/>
</dbReference>
<dbReference type="CDD" id="cd00805">
    <property type="entry name" value="TyrRS_core"/>
    <property type="match status" value="1"/>
</dbReference>
<dbReference type="FunFam" id="1.10.240.10:FF:000001">
    <property type="entry name" value="Tyrosine--tRNA ligase"/>
    <property type="match status" value="1"/>
</dbReference>
<dbReference type="FunFam" id="3.10.290.10:FF:000012">
    <property type="entry name" value="Tyrosine--tRNA ligase"/>
    <property type="match status" value="1"/>
</dbReference>
<dbReference type="FunFam" id="3.40.50.620:FF:000008">
    <property type="entry name" value="Tyrosine--tRNA ligase"/>
    <property type="match status" value="1"/>
</dbReference>
<dbReference type="Gene3D" id="3.40.50.620">
    <property type="entry name" value="HUPs"/>
    <property type="match status" value="1"/>
</dbReference>
<dbReference type="Gene3D" id="3.10.290.10">
    <property type="entry name" value="RNA-binding S4 domain"/>
    <property type="match status" value="1"/>
</dbReference>
<dbReference type="Gene3D" id="1.10.240.10">
    <property type="entry name" value="Tyrosyl-Transfer RNA Synthetase"/>
    <property type="match status" value="1"/>
</dbReference>
<dbReference type="HAMAP" id="MF_02006">
    <property type="entry name" value="Tyr_tRNA_synth_type1"/>
    <property type="match status" value="1"/>
</dbReference>
<dbReference type="InterPro" id="IPR001412">
    <property type="entry name" value="aa-tRNA-synth_I_CS"/>
</dbReference>
<dbReference type="InterPro" id="IPR002305">
    <property type="entry name" value="aa-tRNA-synth_Ic"/>
</dbReference>
<dbReference type="InterPro" id="IPR014729">
    <property type="entry name" value="Rossmann-like_a/b/a_fold"/>
</dbReference>
<dbReference type="InterPro" id="IPR002942">
    <property type="entry name" value="S4_RNA-bd"/>
</dbReference>
<dbReference type="InterPro" id="IPR036986">
    <property type="entry name" value="S4_RNA-bd_sf"/>
</dbReference>
<dbReference type="InterPro" id="IPR054608">
    <property type="entry name" value="SYY-like_C"/>
</dbReference>
<dbReference type="InterPro" id="IPR002307">
    <property type="entry name" value="Tyr-tRNA-ligase"/>
</dbReference>
<dbReference type="InterPro" id="IPR024088">
    <property type="entry name" value="Tyr-tRNA-ligase_bac-type"/>
</dbReference>
<dbReference type="InterPro" id="IPR024107">
    <property type="entry name" value="Tyr-tRNA-ligase_bac_1"/>
</dbReference>
<dbReference type="NCBIfam" id="TIGR00234">
    <property type="entry name" value="tyrS"/>
    <property type="match status" value="1"/>
</dbReference>
<dbReference type="PANTHER" id="PTHR11766:SF0">
    <property type="entry name" value="TYROSINE--TRNA LIGASE, MITOCHONDRIAL"/>
    <property type="match status" value="1"/>
</dbReference>
<dbReference type="PANTHER" id="PTHR11766">
    <property type="entry name" value="TYROSYL-TRNA SYNTHETASE"/>
    <property type="match status" value="1"/>
</dbReference>
<dbReference type="Pfam" id="PF22421">
    <property type="entry name" value="SYY_C-terminal"/>
    <property type="match status" value="1"/>
</dbReference>
<dbReference type="Pfam" id="PF00579">
    <property type="entry name" value="tRNA-synt_1b"/>
    <property type="match status" value="1"/>
</dbReference>
<dbReference type="PRINTS" id="PR01040">
    <property type="entry name" value="TRNASYNTHTYR"/>
</dbReference>
<dbReference type="SMART" id="SM00363">
    <property type="entry name" value="S4"/>
    <property type="match status" value="1"/>
</dbReference>
<dbReference type="SUPFAM" id="SSF55174">
    <property type="entry name" value="Alpha-L RNA-binding motif"/>
    <property type="match status" value="1"/>
</dbReference>
<dbReference type="SUPFAM" id="SSF52374">
    <property type="entry name" value="Nucleotidylyl transferase"/>
    <property type="match status" value="1"/>
</dbReference>
<dbReference type="PROSITE" id="PS00178">
    <property type="entry name" value="AA_TRNA_LIGASE_I"/>
    <property type="match status" value="1"/>
</dbReference>
<dbReference type="PROSITE" id="PS50889">
    <property type="entry name" value="S4"/>
    <property type="match status" value="1"/>
</dbReference>
<feature type="chain" id="PRO_1000189338" description="Tyrosine--tRNA ligase">
    <location>
        <begin position="1"/>
        <end position="418"/>
    </location>
</feature>
<feature type="domain" description="S4 RNA-binding" evidence="1">
    <location>
        <begin position="352"/>
        <end position="418"/>
    </location>
</feature>
<feature type="short sequence motif" description="'HIGH' region">
    <location>
        <begin position="39"/>
        <end position="48"/>
    </location>
</feature>
<feature type="short sequence motif" description="'KMSKS' region">
    <location>
        <begin position="229"/>
        <end position="233"/>
    </location>
</feature>
<feature type="binding site" evidence="1">
    <location>
        <position position="34"/>
    </location>
    <ligand>
        <name>L-tyrosine</name>
        <dbReference type="ChEBI" id="CHEBI:58315"/>
    </ligand>
</feature>
<feature type="binding site" evidence="1">
    <location>
        <position position="169"/>
    </location>
    <ligand>
        <name>L-tyrosine</name>
        <dbReference type="ChEBI" id="CHEBI:58315"/>
    </ligand>
</feature>
<feature type="binding site" evidence="1">
    <location>
        <position position="173"/>
    </location>
    <ligand>
        <name>L-tyrosine</name>
        <dbReference type="ChEBI" id="CHEBI:58315"/>
    </ligand>
</feature>
<feature type="binding site" evidence="1">
    <location>
        <position position="232"/>
    </location>
    <ligand>
        <name>ATP</name>
        <dbReference type="ChEBI" id="CHEBI:30616"/>
    </ligand>
</feature>
<organism>
    <name type="scientific">Streptococcus pneumoniae (strain ATCC 700669 / Spain 23F-1)</name>
    <dbReference type="NCBI Taxonomy" id="561276"/>
    <lineage>
        <taxon>Bacteria</taxon>
        <taxon>Bacillati</taxon>
        <taxon>Bacillota</taxon>
        <taxon>Bacilli</taxon>
        <taxon>Lactobacillales</taxon>
        <taxon>Streptococcaceae</taxon>
        <taxon>Streptococcus</taxon>
    </lineage>
</organism>
<sequence>MHIFDELKERGLIFQTTDEEALRKALEEGQVSYYTGYDPTADSLHLGHLVAILTSRRLQLAGHKPYALVGGATGLIGDPSFKDAERSLQTKDTVDGWVKSIQGQLSRFLDFENGENKAVMVNNYDWFGSISFIDFLRDIGKYFTVNYMMSKESVKKRIETGISYTEFAYQIMQGYDFFVLNQDHNVTLQIGGSDQWGNMTAGTELLRRKADKTGHVITVPLITDATGKKFGKSEGNAVWLNPEKTSPYEMYQFWMNVMDADAVRFLKIFTFLSLDEIEDIRKQFEAAPHERLAQKVLAREVVTLVHGEEAYKEALNITEQLFAGNIKNLSVKELKQGLRGVPNYQVQADENNNIVELLVSSGIVNSKRQAREDVQNGAIYVNGDRIQELDYVLSDADKLENELTVIRRGKKKYFVLTY</sequence>
<comment type="function">
    <text evidence="1">Catalyzes the attachment of tyrosine to tRNA(Tyr) in a two-step reaction: tyrosine is first activated by ATP to form Tyr-AMP and then transferred to the acceptor end of tRNA(Tyr).</text>
</comment>
<comment type="catalytic activity">
    <reaction evidence="1">
        <text>tRNA(Tyr) + L-tyrosine + ATP = L-tyrosyl-tRNA(Tyr) + AMP + diphosphate + H(+)</text>
        <dbReference type="Rhea" id="RHEA:10220"/>
        <dbReference type="Rhea" id="RHEA-COMP:9706"/>
        <dbReference type="Rhea" id="RHEA-COMP:9707"/>
        <dbReference type="ChEBI" id="CHEBI:15378"/>
        <dbReference type="ChEBI" id="CHEBI:30616"/>
        <dbReference type="ChEBI" id="CHEBI:33019"/>
        <dbReference type="ChEBI" id="CHEBI:58315"/>
        <dbReference type="ChEBI" id="CHEBI:78442"/>
        <dbReference type="ChEBI" id="CHEBI:78536"/>
        <dbReference type="ChEBI" id="CHEBI:456215"/>
        <dbReference type="EC" id="6.1.1.1"/>
    </reaction>
</comment>
<comment type="subunit">
    <text evidence="1">Homodimer.</text>
</comment>
<comment type="subcellular location">
    <subcellularLocation>
        <location evidence="1">Cytoplasm</location>
    </subcellularLocation>
</comment>
<comment type="similarity">
    <text evidence="1">Belongs to the class-I aminoacyl-tRNA synthetase family. TyrS type 1 subfamily.</text>
</comment>
<proteinExistence type="inferred from homology"/>
<keyword id="KW-0030">Aminoacyl-tRNA synthetase</keyword>
<keyword id="KW-0067">ATP-binding</keyword>
<keyword id="KW-0963">Cytoplasm</keyword>
<keyword id="KW-0436">Ligase</keyword>
<keyword id="KW-0547">Nucleotide-binding</keyword>
<keyword id="KW-0648">Protein biosynthesis</keyword>
<keyword id="KW-0694">RNA-binding</keyword>
<accession>B8ZPM2</accession>